<protein>
    <recommendedName>
        <fullName>Protein phosphatase PTC7 homolog fig</fullName>
    </recommendedName>
    <alternativeName>
        <fullName>Fos intronic gene protein</fullName>
        <ecNumber>3.1.3.16</ecNumber>
    </alternativeName>
</protein>
<feature type="chain" id="PRO_0000377403" description="Protein phosphatase PTC7 homolog fig">
    <location>
        <begin position="1"/>
        <end position="314"/>
    </location>
</feature>
<feature type="domain" description="PPM-type phosphatase" evidence="4">
    <location>
        <begin position="43"/>
        <end position="309"/>
    </location>
</feature>
<feature type="binding site" evidence="1">
    <location>
        <position position="87"/>
    </location>
    <ligand>
        <name>Mn(2+)</name>
        <dbReference type="ChEBI" id="CHEBI:29035"/>
        <label>1</label>
    </ligand>
</feature>
<feature type="binding site" evidence="1">
    <location>
        <position position="87"/>
    </location>
    <ligand>
        <name>Mn(2+)</name>
        <dbReference type="ChEBI" id="CHEBI:29035"/>
        <label>2</label>
    </ligand>
</feature>
<feature type="binding site" evidence="1">
    <location>
        <position position="88"/>
    </location>
    <ligand>
        <name>Mn(2+)</name>
        <dbReference type="ChEBI" id="CHEBI:29035"/>
        <label>1</label>
    </ligand>
</feature>
<feature type="binding site" evidence="1">
    <location>
        <position position="232"/>
    </location>
    <ligand>
        <name>Mn(2+)</name>
        <dbReference type="ChEBI" id="CHEBI:29035"/>
        <label>2</label>
    </ligand>
</feature>
<dbReference type="EC" id="3.1.3.16"/>
<dbReference type="EMBL" id="CM000364">
    <property type="protein sequence ID" value="EDX14895.1"/>
    <property type="molecule type" value="Genomic_DNA"/>
</dbReference>
<dbReference type="SMR" id="B4R089"/>
<dbReference type="STRING" id="7240.B4R089"/>
<dbReference type="HOGENOM" id="CLU_029404_3_0_1"/>
<dbReference type="OMA" id="DSWFVSS"/>
<dbReference type="OrthoDB" id="60843at2759"/>
<dbReference type="PhylomeDB" id="B4R089"/>
<dbReference type="Proteomes" id="UP000000304">
    <property type="component" value="Chromosome 3R"/>
</dbReference>
<dbReference type="GO" id="GO:0005739">
    <property type="term" value="C:mitochondrion"/>
    <property type="evidence" value="ECO:0007669"/>
    <property type="project" value="TreeGrafter"/>
</dbReference>
<dbReference type="GO" id="GO:0046872">
    <property type="term" value="F:metal ion binding"/>
    <property type="evidence" value="ECO:0007669"/>
    <property type="project" value="UniProtKB-KW"/>
</dbReference>
<dbReference type="GO" id="GO:0004722">
    <property type="term" value="F:protein serine/threonine phosphatase activity"/>
    <property type="evidence" value="ECO:0000250"/>
    <property type="project" value="UniProtKB"/>
</dbReference>
<dbReference type="GO" id="GO:0016311">
    <property type="term" value="P:dephosphorylation"/>
    <property type="evidence" value="ECO:0000250"/>
    <property type="project" value="UniProtKB"/>
</dbReference>
<dbReference type="CDD" id="cd00143">
    <property type="entry name" value="PP2Cc"/>
    <property type="match status" value="1"/>
</dbReference>
<dbReference type="FunFam" id="3.60.40.10:FF:000009">
    <property type="entry name" value="Blast:Protein phosphatase PTC7 homolog"/>
    <property type="match status" value="1"/>
</dbReference>
<dbReference type="Gene3D" id="3.60.40.10">
    <property type="entry name" value="PPM-type phosphatase domain"/>
    <property type="match status" value="1"/>
</dbReference>
<dbReference type="InterPro" id="IPR036457">
    <property type="entry name" value="PPM-type-like_dom_sf"/>
</dbReference>
<dbReference type="InterPro" id="IPR001932">
    <property type="entry name" value="PPM-type_phosphatase-like_dom"/>
</dbReference>
<dbReference type="InterPro" id="IPR039123">
    <property type="entry name" value="PPTC7"/>
</dbReference>
<dbReference type="PANTHER" id="PTHR12320">
    <property type="entry name" value="PROTEIN PHOSPHATASE 2C"/>
    <property type="match status" value="1"/>
</dbReference>
<dbReference type="PANTHER" id="PTHR12320:SF1">
    <property type="entry name" value="PROTEIN PHOSPHATASE PTC7 HOMOLOG"/>
    <property type="match status" value="1"/>
</dbReference>
<dbReference type="Pfam" id="PF07228">
    <property type="entry name" value="SpoIIE"/>
    <property type="match status" value="1"/>
</dbReference>
<dbReference type="SMART" id="SM00331">
    <property type="entry name" value="PP2C_SIG"/>
    <property type="match status" value="1"/>
</dbReference>
<dbReference type="SMART" id="SM00332">
    <property type="entry name" value="PP2Cc"/>
    <property type="match status" value="1"/>
</dbReference>
<dbReference type="SUPFAM" id="SSF81606">
    <property type="entry name" value="PP2C-like"/>
    <property type="match status" value="1"/>
</dbReference>
<dbReference type="PROSITE" id="PS51746">
    <property type="entry name" value="PPM_2"/>
    <property type="match status" value="1"/>
</dbReference>
<accession>B4R089</accession>
<gene>
    <name evidence="2" type="primary">fig</name>
    <name type="ORF">GD17671</name>
</gene>
<proteinExistence type="inferred from homology"/>
<name>PTC71_DROSI</name>
<sequence>MITRMKNWPCLLKRFSIQQFHQFTHLSGRLERAPQSGKSSRDPYLVTVVQGRSKKPRFPGERSNQRFGEDSWFVSSTPLAEVMGVADGVGGWRDLGVDAGRFAKELMSCCSGQTQLSDFDGRSPRNLLIAGFQELSHREQPVVGSSTACLATMHRKDCTLYTANLGDSGFLVVRNGRVLHRSVEQTHDFNTPYQLTVPPEDRKESYYCDKPEMAVSTRHSLLPGDLVLLATDGLFDNMPESTLLSILNGLKERGERDLLEGASRVVEKARELSLNASFQSPFAIKARQHNVSYSGGGKPDDITLILSSVEVPSV</sequence>
<comment type="catalytic activity">
    <reaction>
        <text>O-phospho-L-seryl-[protein] + H2O = L-seryl-[protein] + phosphate</text>
        <dbReference type="Rhea" id="RHEA:20629"/>
        <dbReference type="Rhea" id="RHEA-COMP:9863"/>
        <dbReference type="Rhea" id="RHEA-COMP:11604"/>
        <dbReference type="ChEBI" id="CHEBI:15377"/>
        <dbReference type="ChEBI" id="CHEBI:29999"/>
        <dbReference type="ChEBI" id="CHEBI:43474"/>
        <dbReference type="ChEBI" id="CHEBI:83421"/>
        <dbReference type="EC" id="3.1.3.16"/>
    </reaction>
</comment>
<comment type="catalytic activity">
    <reaction>
        <text>O-phospho-L-threonyl-[protein] + H2O = L-threonyl-[protein] + phosphate</text>
        <dbReference type="Rhea" id="RHEA:47004"/>
        <dbReference type="Rhea" id="RHEA-COMP:11060"/>
        <dbReference type="Rhea" id="RHEA-COMP:11605"/>
        <dbReference type="ChEBI" id="CHEBI:15377"/>
        <dbReference type="ChEBI" id="CHEBI:30013"/>
        <dbReference type="ChEBI" id="CHEBI:43474"/>
        <dbReference type="ChEBI" id="CHEBI:61977"/>
        <dbReference type="EC" id="3.1.3.16"/>
    </reaction>
</comment>
<comment type="cofactor">
    <cofactor evidence="1 5">
        <name>Mg(2+)</name>
        <dbReference type="ChEBI" id="CHEBI:18420"/>
    </cofactor>
    <cofactor evidence="1 5">
        <name>Mn(2+)</name>
        <dbReference type="ChEBI" id="CHEBI:29035"/>
    </cofactor>
</comment>
<comment type="similarity">
    <text evidence="3">Belongs to the PP2C family.</text>
</comment>
<keyword id="KW-0378">Hydrolase</keyword>
<keyword id="KW-0460">Magnesium</keyword>
<keyword id="KW-0464">Manganese</keyword>
<keyword id="KW-0479">Metal-binding</keyword>
<keyword id="KW-0904">Protein phosphatase</keyword>
<keyword id="KW-1185">Reference proteome</keyword>
<evidence type="ECO:0000250" key="1">
    <source>
        <dbReference type="UniProtKB" id="P35813"/>
    </source>
</evidence>
<evidence type="ECO:0000250" key="2">
    <source>
        <dbReference type="UniProtKB" id="Q9VAH4"/>
    </source>
</evidence>
<evidence type="ECO:0000255" key="3"/>
<evidence type="ECO:0000255" key="4">
    <source>
        <dbReference type="PROSITE-ProRule" id="PRU01082"/>
    </source>
</evidence>
<evidence type="ECO:0000305" key="5"/>
<evidence type="ECO:0000312" key="6">
    <source>
        <dbReference type="EMBL" id="EDX14895.1"/>
    </source>
</evidence>
<organism>
    <name type="scientific">Drosophila simulans</name>
    <name type="common">Fruit fly</name>
    <dbReference type="NCBI Taxonomy" id="7240"/>
    <lineage>
        <taxon>Eukaryota</taxon>
        <taxon>Metazoa</taxon>
        <taxon>Ecdysozoa</taxon>
        <taxon>Arthropoda</taxon>
        <taxon>Hexapoda</taxon>
        <taxon>Insecta</taxon>
        <taxon>Pterygota</taxon>
        <taxon>Neoptera</taxon>
        <taxon>Endopterygota</taxon>
        <taxon>Diptera</taxon>
        <taxon>Brachycera</taxon>
        <taxon>Muscomorpha</taxon>
        <taxon>Ephydroidea</taxon>
        <taxon>Drosophilidae</taxon>
        <taxon>Drosophila</taxon>
        <taxon>Sophophora</taxon>
    </lineage>
</organism>
<reference evidence="6" key="1">
    <citation type="journal article" date="2007" name="Nature">
        <title>Evolution of genes and genomes on the Drosophila phylogeny.</title>
        <authorList>
            <consortium name="Drosophila 12 genomes consortium"/>
        </authorList>
    </citation>
    <scope>NUCLEOTIDE SEQUENCE [LARGE SCALE GENOMIC DNA]</scope>
</reference>